<name>SPNE_DROVI</name>
<organism>
    <name type="scientific">Drosophila virilis</name>
    <name type="common">Fruit fly</name>
    <dbReference type="NCBI Taxonomy" id="7244"/>
    <lineage>
        <taxon>Eukaryota</taxon>
        <taxon>Metazoa</taxon>
        <taxon>Ecdysozoa</taxon>
        <taxon>Arthropoda</taxon>
        <taxon>Hexapoda</taxon>
        <taxon>Insecta</taxon>
        <taxon>Pterygota</taxon>
        <taxon>Neoptera</taxon>
        <taxon>Endopterygota</taxon>
        <taxon>Diptera</taxon>
        <taxon>Brachycera</taxon>
        <taxon>Muscomorpha</taxon>
        <taxon>Ephydroidea</taxon>
        <taxon>Drosophilidae</taxon>
        <taxon>Drosophila</taxon>
    </lineage>
</organism>
<dbReference type="EC" id="3.6.4.13"/>
<dbReference type="EMBL" id="CH940650">
    <property type="protein sequence ID" value="EDW66733.1"/>
    <property type="molecule type" value="Genomic_DNA"/>
</dbReference>
<dbReference type="RefSeq" id="XP_002053213.1">
    <property type="nucleotide sequence ID" value="XM_002053177.4"/>
</dbReference>
<dbReference type="SMR" id="B4LX81"/>
<dbReference type="FunCoup" id="B4LX81">
    <property type="interactions" value="172"/>
</dbReference>
<dbReference type="STRING" id="7244.B4LX81"/>
<dbReference type="EnsemblMetazoa" id="FBtr0239690">
    <property type="protein sequence ID" value="FBpp0238182"/>
    <property type="gene ID" value="FBgn0210862"/>
</dbReference>
<dbReference type="EnsemblMetazoa" id="XM_002053177.3">
    <property type="protein sequence ID" value="XP_002053213.1"/>
    <property type="gene ID" value="LOC6631068"/>
</dbReference>
<dbReference type="GeneID" id="6631068"/>
<dbReference type="KEGG" id="dvi:6631068"/>
<dbReference type="CTD" id="41919"/>
<dbReference type="eggNOG" id="KOG0920">
    <property type="taxonomic scope" value="Eukaryota"/>
</dbReference>
<dbReference type="HOGENOM" id="CLU_002601_1_0_1"/>
<dbReference type="InParanoid" id="B4LX81"/>
<dbReference type="OMA" id="QRSAYCS"/>
<dbReference type="OrthoDB" id="66977at2759"/>
<dbReference type="PhylomeDB" id="B4LX81"/>
<dbReference type="Proteomes" id="UP000008792">
    <property type="component" value="Unassembled WGS sequence"/>
</dbReference>
<dbReference type="GO" id="GO:0005634">
    <property type="term" value="C:nucleus"/>
    <property type="evidence" value="ECO:0007669"/>
    <property type="project" value="EnsemblMetazoa"/>
</dbReference>
<dbReference type="GO" id="GO:0043186">
    <property type="term" value="C:P granule"/>
    <property type="evidence" value="ECO:0007669"/>
    <property type="project" value="EnsemblMetazoa"/>
</dbReference>
<dbReference type="GO" id="GO:0005524">
    <property type="term" value="F:ATP binding"/>
    <property type="evidence" value="ECO:0007669"/>
    <property type="project" value="UniProtKB-KW"/>
</dbReference>
<dbReference type="GO" id="GO:0016887">
    <property type="term" value="F:ATP hydrolysis activity"/>
    <property type="evidence" value="ECO:0007669"/>
    <property type="project" value="RHEA"/>
</dbReference>
<dbReference type="GO" id="GO:0003723">
    <property type="term" value="F:RNA binding"/>
    <property type="evidence" value="ECO:0007669"/>
    <property type="project" value="TreeGrafter"/>
</dbReference>
<dbReference type="GO" id="GO:0003724">
    <property type="term" value="F:RNA helicase activity"/>
    <property type="evidence" value="ECO:0007669"/>
    <property type="project" value="UniProtKB-EC"/>
</dbReference>
<dbReference type="GO" id="GO:0046843">
    <property type="term" value="P:dorsal appendage formation"/>
    <property type="evidence" value="ECO:0007669"/>
    <property type="project" value="EnsemblMetazoa"/>
</dbReference>
<dbReference type="GO" id="GO:0007294">
    <property type="term" value="P:germarium-derived oocyte fate determination"/>
    <property type="evidence" value="ECO:0007669"/>
    <property type="project" value="EnsemblMetazoa"/>
</dbReference>
<dbReference type="GO" id="GO:0098795">
    <property type="term" value="P:global gene silencing by mRNA cleavage"/>
    <property type="evidence" value="ECO:0007669"/>
    <property type="project" value="EnsemblMetazoa"/>
</dbReference>
<dbReference type="GO" id="GO:0031507">
    <property type="term" value="P:heterochromatin formation"/>
    <property type="evidence" value="ECO:0007669"/>
    <property type="project" value="EnsemblMetazoa"/>
</dbReference>
<dbReference type="GO" id="GO:0008298">
    <property type="term" value="P:intracellular mRNA localization"/>
    <property type="evidence" value="ECO:0007669"/>
    <property type="project" value="EnsemblMetazoa"/>
</dbReference>
<dbReference type="GO" id="GO:0007076">
    <property type="term" value="P:mitotic chromosome condensation"/>
    <property type="evidence" value="ECO:0007669"/>
    <property type="project" value="EnsemblMetazoa"/>
</dbReference>
<dbReference type="GO" id="GO:0030717">
    <property type="term" value="P:oocyte karyosome formation"/>
    <property type="evidence" value="ECO:0007669"/>
    <property type="project" value="EnsemblMetazoa"/>
</dbReference>
<dbReference type="GO" id="GO:0030720">
    <property type="term" value="P:oocyte localization involved in germarium-derived egg chamber formation"/>
    <property type="evidence" value="ECO:0007669"/>
    <property type="project" value="EnsemblMetazoa"/>
</dbReference>
<dbReference type="GO" id="GO:0001556">
    <property type="term" value="P:oocyte maturation"/>
    <property type="evidence" value="ECO:0007669"/>
    <property type="project" value="EnsemblMetazoa"/>
</dbReference>
<dbReference type="GO" id="GO:0009949">
    <property type="term" value="P:polarity specification of anterior/posterior axis"/>
    <property type="evidence" value="ECO:0007669"/>
    <property type="project" value="EnsemblMetazoa"/>
</dbReference>
<dbReference type="GO" id="GO:0009951">
    <property type="term" value="P:polarity specification of dorsal/ventral axis"/>
    <property type="evidence" value="ECO:0007669"/>
    <property type="project" value="EnsemblMetazoa"/>
</dbReference>
<dbReference type="GO" id="GO:0007317">
    <property type="term" value="P:regulation of pole plasm oskar mRNA localization"/>
    <property type="evidence" value="ECO:0007669"/>
    <property type="project" value="EnsemblMetazoa"/>
</dbReference>
<dbReference type="GO" id="GO:0140965">
    <property type="term" value="P:secondary piRNA processing"/>
    <property type="evidence" value="ECO:0007669"/>
    <property type="project" value="EnsemblMetazoa"/>
</dbReference>
<dbReference type="GO" id="GO:0007283">
    <property type="term" value="P:spermatogenesis"/>
    <property type="evidence" value="ECO:0007669"/>
    <property type="project" value="UniProtKB-KW"/>
</dbReference>
<dbReference type="GO" id="GO:0141009">
    <property type="term" value="P:transposable element silencing by piRNA-mediated mRNA destabilization"/>
    <property type="evidence" value="ECO:0007669"/>
    <property type="project" value="EnsemblMetazoa"/>
</dbReference>
<dbReference type="CDD" id="cd18791">
    <property type="entry name" value="SF2_C_RHA"/>
    <property type="match status" value="1"/>
</dbReference>
<dbReference type="FunFam" id="3.40.50.300:FF:001676">
    <property type="entry name" value="DExH-box ATP-dependent RNA helicase DExH7 chloroplastic"/>
    <property type="match status" value="1"/>
</dbReference>
<dbReference type="Gene3D" id="1.20.120.1080">
    <property type="match status" value="1"/>
</dbReference>
<dbReference type="Gene3D" id="2.30.30.140">
    <property type="match status" value="1"/>
</dbReference>
<dbReference type="Gene3D" id="2.40.50.90">
    <property type="match status" value="1"/>
</dbReference>
<dbReference type="Gene3D" id="3.40.50.300">
    <property type="entry name" value="P-loop containing nucleotide triphosphate hydrolases"/>
    <property type="match status" value="2"/>
</dbReference>
<dbReference type="InterPro" id="IPR011545">
    <property type="entry name" value="DEAD/DEAH_box_helicase_dom"/>
</dbReference>
<dbReference type="InterPro" id="IPR007502">
    <property type="entry name" value="Helicase-assoc_dom"/>
</dbReference>
<dbReference type="InterPro" id="IPR014001">
    <property type="entry name" value="Helicase_ATP-bd"/>
</dbReference>
<dbReference type="InterPro" id="IPR001650">
    <property type="entry name" value="Helicase_C-like"/>
</dbReference>
<dbReference type="InterPro" id="IPR027417">
    <property type="entry name" value="P-loop_NTPase"/>
</dbReference>
<dbReference type="InterPro" id="IPR035437">
    <property type="entry name" value="SNase_OB-fold_sf"/>
</dbReference>
<dbReference type="InterPro" id="IPR002999">
    <property type="entry name" value="Tudor"/>
</dbReference>
<dbReference type="InterPro" id="IPR013087">
    <property type="entry name" value="Znf_C2H2_type"/>
</dbReference>
<dbReference type="PANTHER" id="PTHR18934">
    <property type="entry name" value="ATP-DEPENDENT RNA HELICASE"/>
    <property type="match status" value="1"/>
</dbReference>
<dbReference type="PANTHER" id="PTHR18934:SF113">
    <property type="entry name" value="ATP-DEPENDENT RNA HELICASE TDRD9"/>
    <property type="match status" value="1"/>
</dbReference>
<dbReference type="Pfam" id="PF00270">
    <property type="entry name" value="DEAD"/>
    <property type="match status" value="1"/>
</dbReference>
<dbReference type="Pfam" id="PF21010">
    <property type="entry name" value="HA2_C"/>
    <property type="match status" value="1"/>
</dbReference>
<dbReference type="Pfam" id="PF00271">
    <property type="entry name" value="Helicase_C"/>
    <property type="match status" value="1"/>
</dbReference>
<dbReference type="Pfam" id="PF00567">
    <property type="entry name" value="TUDOR"/>
    <property type="match status" value="1"/>
</dbReference>
<dbReference type="SMART" id="SM00487">
    <property type="entry name" value="DEXDc"/>
    <property type="match status" value="1"/>
</dbReference>
<dbReference type="SMART" id="SM00847">
    <property type="entry name" value="HA2"/>
    <property type="match status" value="1"/>
</dbReference>
<dbReference type="SMART" id="SM00490">
    <property type="entry name" value="HELICc"/>
    <property type="match status" value="1"/>
</dbReference>
<dbReference type="SMART" id="SM00333">
    <property type="entry name" value="TUDOR"/>
    <property type="match status" value="1"/>
</dbReference>
<dbReference type="SUPFAM" id="SSF52540">
    <property type="entry name" value="P-loop containing nucleoside triphosphate hydrolases"/>
    <property type="match status" value="1"/>
</dbReference>
<dbReference type="SUPFAM" id="SSF63748">
    <property type="entry name" value="Tudor/PWWP/MBT"/>
    <property type="match status" value="1"/>
</dbReference>
<dbReference type="PROSITE" id="PS51192">
    <property type="entry name" value="HELICASE_ATP_BIND_1"/>
    <property type="match status" value="1"/>
</dbReference>
<dbReference type="PROSITE" id="PS51194">
    <property type="entry name" value="HELICASE_CTER"/>
    <property type="match status" value="1"/>
</dbReference>
<dbReference type="PROSITE" id="PS50304">
    <property type="entry name" value="TUDOR"/>
    <property type="match status" value="1"/>
</dbReference>
<proteinExistence type="inferred from homology"/>
<protein>
    <recommendedName>
        <fullName>Probable ATP-dependent RNA helicase spindle-E</fullName>
        <ecNumber>3.6.4.13</ecNumber>
    </recommendedName>
    <alternativeName>
        <fullName>Homeless</fullName>
    </alternativeName>
</protein>
<keyword id="KW-0067">ATP-binding</keyword>
<keyword id="KW-0963">Cytoplasm</keyword>
<keyword id="KW-0217">Developmental protein</keyword>
<keyword id="KW-0221">Differentiation</keyword>
<keyword id="KW-0347">Helicase</keyword>
<keyword id="KW-0378">Hydrolase</keyword>
<keyword id="KW-0469">Meiosis</keyword>
<keyword id="KW-0547">Nucleotide-binding</keyword>
<keyword id="KW-0896">Oogenesis</keyword>
<keyword id="KW-1185">Reference proteome</keyword>
<keyword id="KW-0943">RNA-mediated gene silencing</keyword>
<keyword id="KW-0744">Spermatogenesis</keyword>
<reference key="1">
    <citation type="journal article" date="2007" name="Nature">
        <title>Evolution of genes and genomes on the Drosophila phylogeny.</title>
        <authorList>
            <consortium name="Drosophila 12 genomes consortium"/>
        </authorList>
    </citation>
    <scope>NUCLEOTIDE SEQUENCE [LARGE SCALE GENOMIC DNA]</scope>
    <source>
        <strain>Tucson 15010-1051.87</strain>
    </source>
</reference>
<feature type="chain" id="PRO_0000391921" description="Probable ATP-dependent RNA helicase spindle-E">
    <location>
        <begin position="1"/>
        <end position="1433"/>
    </location>
</feature>
<feature type="domain" description="Helicase ATP-binding" evidence="3">
    <location>
        <begin position="127"/>
        <end position="294"/>
    </location>
</feature>
<feature type="domain" description="Helicase C-terminal" evidence="4">
    <location>
        <begin position="354"/>
        <end position="526"/>
    </location>
</feature>
<feature type="domain" description="Tudor" evidence="2">
    <location>
        <begin position="937"/>
        <end position="1000"/>
    </location>
</feature>
<feature type="region of interest" description="Disordered" evidence="5">
    <location>
        <begin position="76"/>
        <end position="98"/>
    </location>
</feature>
<feature type="short sequence motif" description="DEAH box">
    <location>
        <begin position="240"/>
        <end position="243"/>
    </location>
</feature>
<feature type="compositionally biased region" description="Acidic residues" evidence="5">
    <location>
        <begin position="81"/>
        <end position="91"/>
    </location>
</feature>
<feature type="binding site" evidence="3">
    <location>
        <begin position="140"/>
        <end position="147"/>
    </location>
    <ligand>
        <name>ATP</name>
        <dbReference type="ChEBI" id="CHEBI:30616"/>
    </ligand>
</feature>
<comment type="function">
    <text evidence="1">Probable ATP-binding RNA helicase which plays a central role during spermatogenesis and oogenesis by repressing transposable elements and preventing their mobilization, which is essential for the germline integrity. Acts via the piRNA metabolic process, which mediates the repression of transposable elements during meiosis by forming complexes composed of piRNAs and Piwi and govern the methylation and subsequent repression of transposons. Involved in the repression of LTR retrotransposon copia. Also involved in telomere regulation by repressing specialized telomeric retroelements HeT-A, TAHRE, and TART; Drosophila telomeres being maintained by transposition of specialized telomeric retroelements. Involved in telomeric trans-silencing, a repression mechanism by which a transposon or a transgene inserted in subtelomeric heterochromatin has the capacity to repress in trans in the female germline, a homologous transposon, or transgene located in euchromatin. Involved in the repression of testis-expressed Stellate genes by the homologous Su(Ste) repeats. Required for anteroposterior and dorsoventral axis formation during oogenesis (By similarity).</text>
</comment>
<comment type="catalytic activity">
    <reaction>
        <text>ATP + H2O = ADP + phosphate + H(+)</text>
        <dbReference type="Rhea" id="RHEA:13065"/>
        <dbReference type="ChEBI" id="CHEBI:15377"/>
        <dbReference type="ChEBI" id="CHEBI:15378"/>
        <dbReference type="ChEBI" id="CHEBI:30616"/>
        <dbReference type="ChEBI" id="CHEBI:43474"/>
        <dbReference type="ChEBI" id="CHEBI:456216"/>
        <dbReference type="EC" id="3.6.4.13"/>
    </reaction>
</comment>
<comment type="subcellular location">
    <subcellularLocation>
        <location evidence="1">Cytoplasm</location>
    </subcellularLocation>
    <text evidence="1">Component of the nuage, also named P granule, a germ-cell-specific organelle required to repress transposon during meiosis.</text>
</comment>
<comment type="similarity">
    <text evidence="6">Belongs to the DEAD box helicase family. DEAH subfamily.</text>
</comment>
<evidence type="ECO:0000250" key="1"/>
<evidence type="ECO:0000255" key="2">
    <source>
        <dbReference type="PROSITE-ProRule" id="PRU00211"/>
    </source>
</evidence>
<evidence type="ECO:0000255" key="3">
    <source>
        <dbReference type="PROSITE-ProRule" id="PRU00541"/>
    </source>
</evidence>
<evidence type="ECO:0000255" key="4">
    <source>
        <dbReference type="PROSITE-ProRule" id="PRU00542"/>
    </source>
</evidence>
<evidence type="ECO:0000256" key="5">
    <source>
        <dbReference type="SAM" id="MobiDB-lite"/>
    </source>
</evidence>
<evidence type="ECO:0000305" key="6"/>
<gene>
    <name type="primary">spn-E</name>
    <name type="synonym">hls</name>
    <name type="ORF">GJ23765</name>
</gene>
<accession>B4LX81</accession>
<sequence>MDSDLMDFFDFSKQFKRGTALKGCITGDPNALTTESRDSKPIKREKIGTDYVNEIVEKEKQLMNKLVDGQSVAKRNRTLDELDSDDEEENMQEQPSVRSDEAYYEKYRFDLNRNKNLPIYAQREQIMKAIRENPVVILKGETGCGKTTQVPQYILDEACKRREFCNIVVTQPRRIAAISIANRVCQERQWQPGTVCSYQVGLHRQSNVEDTRLLYCTTGVLLNNLIRLKTLTHYTHIVLDEVHERDQDMDFLLIVVRRLLALNSRHVKVILMSATIDTREFSKYFATSSAFPPVVTASHGRKYPLVKYYRDQLKNIHWKDEPQERAPGIGPEGYADAIKILLVIDNMERKAVGQSLQSYEEAKRTGSVLIFLPGINEIDTMADHITSVMEENPTMIITIVRCHSLMSPDSQEEVFQPPLPGHRKIILTTNIAESSITVPDVSYVIDFCLTKVLHTDTATNYSCLRLEWASKVNCRQRAGRVGRLRSGRVYRMVSKAFYLEEMKEFGIPEMLRSPLQNSVLKAKELEMGRPSEILALAMSPPNLSDIQNTVLLLKEVGALYTTVDGVYEELDGDLTYWGTIMSRFPLDVRLSRLIILGYVFNCLEEVIVIAAGMTVRSLYLTGKRRQVNDAFWMHYIFADGSGSDMVAIWRVYRIYLNMCQDRMLKESAEQWARRFNVNLRSLKEMHLMVQELRQRCASVNLQPLPYGTCQMWDDREKSIILKVIIAGAFYPNYFMRSNKSNADYDRSLFQSICGNDPCRTVFFTHYEPRYMGELYTRRIKELFLEVKIPPENMDVTFLHGSEKVFVTFKSDDEDMDTAKVVQVPGRVMTEVYKAVRMRLENQNRPLRVMDQNSALRYVQDRKIGVVTEGTWFPPSNQWNVELLTLPSVFAKNITGLVTYIVSCGKFYFQPRALAESIASMSEIFNGPQQLSCHVRNASAVTKGLQLLAKRGHLFQRAVVLRIETQTNGHPRFRVRFIDYGDMAVLPMDQLRLMPHELKRDFDQLPPRMFECRLALVQPSMVTSSYNRWPKAANDMLISVAQCGRLELEVYSLVNNVAAVLIHMRDGVLNDRLVERQLARRADEDYMSRKDHDLRIRKQEAKRNISVAEQERINEEYLRFAQLPKDMDLEPPPLDKCNLSIRLRGPFSPLESSMNSMLRIGMYKSVTIDKDSVNAVLLDTDPQDRHDQMVVAASVTETDNTERLTARGTTLMPNIHGFGALMAMLFCPTMQIKCNKDRTKYVCLLAGLGFDPETLEPYFAEHDMVINLDVTILRDDIRIINQMRYNIDSMFYNFDANEMPSVGTEDRVVIFNQLRSLLTRLLGKDRSFIERHVSNSEYLWEDMSDLEPPSEPYGKRAIFPMHSSYDLENDNLSNLLELQANCKQLYDWRNFEGNLQTQVCRLCNESLESVAELRLHLLTQLHRDREKQVGYKQQ</sequence>